<proteinExistence type="inferred from homology"/>
<sequence>MLSPSQSLQYQKESVERALTCANCGQKLHVLEVHVCEYCCAELMSDPNSSMYEEEDDE</sequence>
<comment type="similarity">
    <text evidence="1">Belongs to the ninF family.</text>
</comment>
<protein>
    <recommendedName>
        <fullName>Protein ninF</fullName>
    </recommendedName>
</protein>
<feature type="chain" id="PRO_0000077625" description="Protein ninF">
    <location>
        <begin position="1"/>
        <end position="58"/>
    </location>
</feature>
<dbReference type="EMBL" id="AF034975">
    <property type="protein sequence ID" value="AAD04651.1"/>
    <property type="molecule type" value="Genomic_DNA"/>
</dbReference>
<dbReference type="InterPro" id="IPR008712">
    <property type="entry name" value="NinF"/>
</dbReference>
<dbReference type="Pfam" id="PF05810">
    <property type="entry name" value="NinF"/>
    <property type="match status" value="1"/>
</dbReference>
<reference key="1">
    <citation type="journal article" date="1998" name="Mol. Microbiol.">
        <title>Functional and genetic analysis of regulatory regions of coliphage H-19B: location of shiga-like toxin and lysis genes suggest a role for phage functions in toxin release.</title>
        <authorList>
            <person name="Neely M.N."/>
            <person name="Friedman D.I."/>
        </authorList>
    </citation>
    <scope>NUCLEOTIDE SEQUENCE [GENOMIC DNA]</scope>
</reference>
<name>NINF_BPH19</name>
<organismHost>
    <name type="scientific">Escherichia coli</name>
    <dbReference type="NCBI Taxonomy" id="562"/>
</organismHost>
<gene>
    <name type="primary">ninF</name>
</gene>
<accession>O48425</accession>
<organism>
    <name type="scientific">Enterobacteria phage H19B</name>
    <name type="common">Bacteriophage H19B</name>
    <dbReference type="NCBI Taxonomy" id="69932"/>
    <lineage>
        <taxon>Viruses</taxon>
        <taxon>Duplodnaviria</taxon>
        <taxon>Heunggongvirae</taxon>
        <taxon>Uroviricota</taxon>
        <taxon>Caudoviricetes</taxon>
        <taxon>Lambdavirus</taxon>
    </lineage>
</organism>
<evidence type="ECO:0000305" key="1"/>